<proteinExistence type="evidence at transcript level"/>
<comment type="catalytic activity">
    <reaction>
        <text>Hydrolysis of (1-&gt;3)-beta-D-glucosidic linkages in (1-&gt;3)-beta-D-glucans.</text>
        <dbReference type="EC" id="3.2.1.39"/>
    </reaction>
</comment>
<comment type="subcellular location">
    <subcellularLocation>
        <location>Cell membrane</location>
        <topology>Lipid-anchor</topology>
        <topology>GPI-anchor</topology>
    </subcellularLocation>
</comment>
<comment type="alternative products">
    <event type="alternative splicing"/>
    <isoform>
        <id>O65399-1</id>
        <name>1</name>
        <sequence type="displayed"/>
    </isoform>
    <text>A number of isoforms are produced. According to EST sequences.</text>
</comment>
<comment type="PTM">
    <text evidence="1">Contains two additional disulfide bonds.</text>
</comment>
<comment type="similarity">
    <text evidence="4">Belongs to the glycosyl hydrolase 17 family.</text>
</comment>
<comment type="sequence caution" evidence="4">
    <conflict type="erroneous gene model prediction">
        <sequence resource="EMBL-CDS" id="AAC17632"/>
    </conflict>
</comment>
<comment type="sequence caution" evidence="4">
    <conflict type="miscellaneous discrepancy">
        <sequence resource="EMBL-CDS" id="AAO42272"/>
    </conflict>
    <text>Probable cloning artifact leading to a deletion into the sequence.</text>
</comment>
<organism>
    <name type="scientific">Arabidopsis thaliana</name>
    <name type="common">Mouse-ear cress</name>
    <dbReference type="NCBI Taxonomy" id="3702"/>
    <lineage>
        <taxon>Eukaryota</taxon>
        <taxon>Viridiplantae</taxon>
        <taxon>Streptophyta</taxon>
        <taxon>Embryophyta</taxon>
        <taxon>Tracheophyta</taxon>
        <taxon>Spermatophyta</taxon>
        <taxon>Magnoliopsida</taxon>
        <taxon>eudicotyledons</taxon>
        <taxon>Gunneridae</taxon>
        <taxon>Pentapetalae</taxon>
        <taxon>rosids</taxon>
        <taxon>malvids</taxon>
        <taxon>Brassicales</taxon>
        <taxon>Brassicaceae</taxon>
        <taxon>Camelineae</taxon>
        <taxon>Arabidopsis</taxon>
    </lineage>
</organism>
<reference key="1">
    <citation type="journal article" date="2000" name="Nature">
        <title>Sequence and analysis of chromosome 1 of the plant Arabidopsis thaliana.</title>
        <authorList>
            <person name="Theologis A."/>
            <person name="Ecker J.R."/>
            <person name="Palm C.J."/>
            <person name="Federspiel N.A."/>
            <person name="Kaul S."/>
            <person name="White O."/>
            <person name="Alonso J."/>
            <person name="Altafi H."/>
            <person name="Araujo R."/>
            <person name="Bowman C.L."/>
            <person name="Brooks S.Y."/>
            <person name="Buehler E."/>
            <person name="Chan A."/>
            <person name="Chao Q."/>
            <person name="Chen H."/>
            <person name="Cheuk R.F."/>
            <person name="Chin C.W."/>
            <person name="Chung M.K."/>
            <person name="Conn L."/>
            <person name="Conway A.B."/>
            <person name="Conway A.R."/>
            <person name="Creasy T.H."/>
            <person name="Dewar K."/>
            <person name="Dunn P."/>
            <person name="Etgu P."/>
            <person name="Feldblyum T.V."/>
            <person name="Feng J.-D."/>
            <person name="Fong B."/>
            <person name="Fujii C.Y."/>
            <person name="Gill J.E."/>
            <person name="Goldsmith A.D."/>
            <person name="Haas B."/>
            <person name="Hansen N.F."/>
            <person name="Hughes B."/>
            <person name="Huizar L."/>
            <person name="Hunter J.L."/>
            <person name="Jenkins J."/>
            <person name="Johnson-Hopson C."/>
            <person name="Khan S."/>
            <person name="Khaykin E."/>
            <person name="Kim C.J."/>
            <person name="Koo H.L."/>
            <person name="Kremenetskaia I."/>
            <person name="Kurtz D.B."/>
            <person name="Kwan A."/>
            <person name="Lam B."/>
            <person name="Langin-Hooper S."/>
            <person name="Lee A."/>
            <person name="Lee J.M."/>
            <person name="Lenz C.A."/>
            <person name="Li J.H."/>
            <person name="Li Y.-P."/>
            <person name="Lin X."/>
            <person name="Liu S.X."/>
            <person name="Liu Z.A."/>
            <person name="Luros J.S."/>
            <person name="Maiti R."/>
            <person name="Marziali A."/>
            <person name="Militscher J."/>
            <person name="Miranda M."/>
            <person name="Nguyen M."/>
            <person name="Nierman W.C."/>
            <person name="Osborne B.I."/>
            <person name="Pai G."/>
            <person name="Peterson J."/>
            <person name="Pham P.K."/>
            <person name="Rizzo M."/>
            <person name="Rooney T."/>
            <person name="Rowley D."/>
            <person name="Sakano H."/>
            <person name="Salzberg S.L."/>
            <person name="Schwartz J.R."/>
            <person name="Shinn P."/>
            <person name="Southwick A.M."/>
            <person name="Sun H."/>
            <person name="Tallon L.J."/>
            <person name="Tambunga G."/>
            <person name="Toriumi M.J."/>
            <person name="Town C.D."/>
            <person name="Utterback T."/>
            <person name="Van Aken S."/>
            <person name="Vaysberg M."/>
            <person name="Vysotskaia V.S."/>
            <person name="Walker M."/>
            <person name="Wu D."/>
            <person name="Yu G."/>
            <person name="Fraser C.M."/>
            <person name="Venter J.C."/>
            <person name="Davis R.W."/>
        </authorList>
    </citation>
    <scope>NUCLEOTIDE SEQUENCE [LARGE SCALE GENOMIC DNA]</scope>
    <source>
        <strain>cv. Columbia</strain>
    </source>
</reference>
<reference key="2">
    <citation type="journal article" date="2017" name="Plant J.">
        <title>Araport11: a complete reannotation of the Arabidopsis thaliana reference genome.</title>
        <authorList>
            <person name="Cheng C.Y."/>
            <person name="Krishnakumar V."/>
            <person name="Chan A.P."/>
            <person name="Thibaud-Nissen F."/>
            <person name="Schobel S."/>
            <person name="Town C.D."/>
        </authorList>
    </citation>
    <scope>GENOME REANNOTATION</scope>
    <source>
        <strain>cv. Columbia</strain>
    </source>
</reference>
<reference key="3">
    <citation type="journal article" date="2003" name="Science">
        <title>Empirical analysis of transcriptional activity in the Arabidopsis genome.</title>
        <authorList>
            <person name="Yamada K."/>
            <person name="Lim J."/>
            <person name="Dale J.M."/>
            <person name="Chen H."/>
            <person name="Shinn P."/>
            <person name="Palm C.J."/>
            <person name="Southwick A.M."/>
            <person name="Wu H.C."/>
            <person name="Kim C.J."/>
            <person name="Nguyen M."/>
            <person name="Pham P.K."/>
            <person name="Cheuk R.F."/>
            <person name="Karlin-Newmann G."/>
            <person name="Liu S.X."/>
            <person name="Lam B."/>
            <person name="Sakano H."/>
            <person name="Wu T."/>
            <person name="Yu G."/>
            <person name="Miranda M."/>
            <person name="Quach H.L."/>
            <person name="Tripp M."/>
            <person name="Chang C.H."/>
            <person name="Lee J.M."/>
            <person name="Toriumi M.J."/>
            <person name="Chan M.M."/>
            <person name="Tang C.C."/>
            <person name="Onodera C.S."/>
            <person name="Deng J.M."/>
            <person name="Akiyama K."/>
            <person name="Ansari Y."/>
            <person name="Arakawa T."/>
            <person name="Banh J."/>
            <person name="Banno F."/>
            <person name="Bowser L."/>
            <person name="Brooks S.Y."/>
            <person name="Carninci P."/>
            <person name="Chao Q."/>
            <person name="Choy N."/>
            <person name="Enju A."/>
            <person name="Goldsmith A.D."/>
            <person name="Gurjal M."/>
            <person name="Hansen N.F."/>
            <person name="Hayashizaki Y."/>
            <person name="Johnson-Hopson C."/>
            <person name="Hsuan V.W."/>
            <person name="Iida K."/>
            <person name="Karnes M."/>
            <person name="Khan S."/>
            <person name="Koesema E."/>
            <person name="Ishida J."/>
            <person name="Jiang P.X."/>
            <person name="Jones T."/>
            <person name="Kawai J."/>
            <person name="Kamiya A."/>
            <person name="Meyers C."/>
            <person name="Nakajima M."/>
            <person name="Narusaka M."/>
            <person name="Seki M."/>
            <person name="Sakurai T."/>
            <person name="Satou M."/>
            <person name="Tamse R."/>
            <person name="Vaysberg M."/>
            <person name="Wallender E.K."/>
            <person name="Wong C."/>
            <person name="Yamamura Y."/>
            <person name="Yuan S."/>
            <person name="Shinozaki K."/>
            <person name="Davis R.W."/>
            <person name="Theologis A."/>
            <person name="Ecker J.R."/>
        </authorList>
    </citation>
    <scope>NUCLEOTIDE SEQUENCE [LARGE SCALE MRNA]</scope>
    <source>
        <strain>cv. Columbia</strain>
    </source>
</reference>
<dbReference type="EC" id="3.2.1.39"/>
<dbReference type="EMBL" id="AC002131">
    <property type="protein sequence ID" value="AAC17632.1"/>
    <property type="status" value="ALT_SEQ"/>
    <property type="molecule type" value="Genomic_DNA"/>
</dbReference>
<dbReference type="EMBL" id="AC007296">
    <property type="status" value="NOT_ANNOTATED_CDS"/>
    <property type="molecule type" value="Genomic_DNA"/>
</dbReference>
<dbReference type="EMBL" id="CP002684">
    <property type="protein sequence ID" value="AEE28791.1"/>
    <property type="molecule type" value="Genomic_DNA"/>
</dbReference>
<dbReference type="EMBL" id="BT004271">
    <property type="protein sequence ID" value="AAO42272.1"/>
    <property type="status" value="ALT_SEQ"/>
    <property type="molecule type" value="mRNA"/>
</dbReference>
<dbReference type="PIR" id="E86252">
    <property type="entry name" value="E86252"/>
</dbReference>
<dbReference type="RefSeq" id="NP_001184967.1">
    <molecule id="O65399-1"/>
    <property type="nucleotide sequence ID" value="NM_001198038.2"/>
</dbReference>
<dbReference type="RefSeq" id="NP_001323381.1">
    <property type="nucleotide sequence ID" value="NM_001332003.1"/>
</dbReference>
<dbReference type="SMR" id="O65399"/>
<dbReference type="FunCoup" id="O65399">
    <property type="interactions" value="520"/>
</dbReference>
<dbReference type="STRING" id="3702.O65399"/>
<dbReference type="CAZy" id="CBM43">
    <property type="family name" value="Carbohydrate-Binding Module Family 43"/>
</dbReference>
<dbReference type="CAZy" id="GH17">
    <property type="family name" value="Glycoside Hydrolase Family 17"/>
</dbReference>
<dbReference type="GlyGen" id="O65399">
    <property type="glycosylation" value="8 sites"/>
</dbReference>
<dbReference type="PaxDb" id="3702-AT1G11820.2"/>
<dbReference type="ProteomicsDB" id="221953">
    <molecule id="O65399-1"/>
</dbReference>
<dbReference type="EnsemblPlants" id="AT1G11820.2">
    <molecule id="O65399-1"/>
    <property type="protein sequence ID" value="AT1G11820.2"/>
    <property type="gene ID" value="AT1G11820"/>
</dbReference>
<dbReference type="GeneID" id="837730"/>
<dbReference type="Gramene" id="AT1G11820.2">
    <molecule id="O65399-1"/>
    <property type="protein sequence ID" value="AT1G11820.2"/>
    <property type="gene ID" value="AT1G11820"/>
</dbReference>
<dbReference type="KEGG" id="ath:AT1G11820"/>
<dbReference type="Araport" id="AT1G11820"/>
<dbReference type="TAIR" id="AT1G11820"/>
<dbReference type="eggNOG" id="ENOG502QTII">
    <property type="taxonomic scope" value="Eukaryota"/>
</dbReference>
<dbReference type="HOGENOM" id="CLU_024953_3_3_1"/>
<dbReference type="InParanoid" id="O65399"/>
<dbReference type="OrthoDB" id="941679at2759"/>
<dbReference type="BioCyc" id="ARA:AT1G11820-MONOMER"/>
<dbReference type="PRO" id="PR:O65399"/>
<dbReference type="Proteomes" id="UP000006548">
    <property type="component" value="Chromosome 1"/>
</dbReference>
<dbReference type="ExpressionAtlas" id="O65399">
    <property type="expression patterns" value="baseline and differential"/>
</dbReference>
<dbReference type="GO" id="GO:0005576">
    <property type="term" value="C:extracellular region"/>
    <property type="evidence" value="ECO:0007005"/>
    <property type="project" value="TAIR"/>
</dbReference>
<dbReference type="GO" id="GO:0005886">
    <property type="term" value="C:plasma membrane"/>
    <property type="evidence" value="ECO:0007669"/>
    <property type="project" value="UniProtKB-SubCell"/>
</dbReference>
<dbReference type="GO" id="GO:0098552">
    <property type="term" value="C:side of membrane"/>
    <property type="evidence" value="ECO:0007669"/>
    <property type="project" value="UniProtKB-KW"/>
</dbReference>
<dbReference type="GO" id="GO:0042973">
    <property type="term" value="F:glucan endo-1,3-beta-D-glucosidase activity"/>
    <property type="evidence" value="ECO:0007669"/>
    <property type="project" value="UniProtKB-EC"/>
</dbReference>
<dbReference type="GO" id="GO:0005975">
    <property type="term" value="P:carbohydrate metabolic process"/>
    <property type="evidence" value="ECO:0007669"/>
    <property type="project" value="InterPro"/>
</dbReference>
<dbReference type="GO" id="GO:0006952">
    <property type="term" value="P:defense response"/>
    <property type="evidence" value="ECO:0007669"/>
    <property type="project" value="UniProtKB-KW"/>
</dbReference>
<dbReference type="FunFam" id="1.20.58.1040:FF:000009">
    <property type="entry name" value="Glucan endo-1,3-beta-glucosidase 1"/>
    <property type="match status" value="1"/>
</dbReference>
<dbReference type="FunFam" id="3.20.20.80:FF:000002">
    <property type="entry name" value="Glucan endo-1,3-beta-glucosidase 3"/>
    <property type="match status" value="1"/>
</dbReference>
<dbReference type="Gene3D" id="1.20.58.1040">
    <property type="match status" value="1"/>
</dbReference>
<dbReference type="Gene3D" id="3.20.20.80">
    <property type="entry name" value="Glycosidases"/>
    <property type="match status" value="1"/>
</dbReference>
<dbReference type="InterPro" id="IPR000490">
    <property type="entry name" value="Glyco_hydro_17"/>
</dbReference>
<dbReference type="InterPro" id="IPR044965">
    <property type="entry name" value="Glyco_hydro_17_plant"/>
</dbReference>
<dbReference type="InterPro" id="IPR017853">
    <property type="entry name" value="Glycoside_hydrolase_SF"/>
</dbReference>
<dbReference type="InterPro" id="IPR012946">
    <property type="entry name" value="X8"/>
</dbReference>
<dbReference type="PANTHER" id="PTHR32227">
    <property type="entry name" value="GLUCAN ENDO-1,3-BETA-GLUCOSIDASE BG1-RELATED-RELATED"/>
    <property type="match status" value="1"/>
</dbReference>
<dbReference type="Pfam" id="PF00332">
    <property type="entry name" value="Glyco_hydro_17"/>
    <property type="match status" value="1"/>
</dbReference>
<dbReference type="Pfam" id="PF07983">
    <property type="entry name" value="X8"/>
    <property type="match status" value="1"/>
</dbReference>
<dbReference type="SMART" id="SM00768">
    <property type="entry name" value="X8"/>
    <property type="match status" value="1"/>
</dbReference>
<dbReference type="SUPFAM" id="SSF51445">
    <property type="entry name" value="(Trans)glycosidases"/>
    <property type="match status" value="1"/>
</dbReference>
<dbReference type="PROSITE" id="PS00587">
    <property type="entry name" value="GLYCOSYL_HYDROL_F17"/>
    <property type="match status" value="1"/>
</dbReference>
<sequence length="511" mass="55630">MAFTSMVSTVPVLFFFFTLLLISANSSSLSHNIKVQEQDKDPFVGFNIGTDVSNLLSPTELVKFLQAQKVNHVRLYDADPELLKALAKTKVRVIISVPNNQLLAIGSSNSTAASWIGRNVVAYYPETLITAISVGDEVLTTVPSSAPLLLPAIESLYNALVASNLHTQIKVSTPHAASIMLDTFPPSQAYFNQTWHSIMVPLLQFLSKTGSPLMMNLYPYYVYMQNKGVVPLDNCLFEPLTPSKEMVDPNTLLHYTNVLDAMVDAAYVSMKNLNVSDVAVLVTESGWPSKGDSKEPYATIDNADTYNSNLIKHVFDRTGTPLHPEMTSSVYIYELFNEDLRAPPVSEASWGLFYGNSTPVYLLHVSGSGTFLANDTTNQTYCIAMDGVDAKTLQAALDWACGPGRSNCSEIQPGESCYQPNNVKGHASFAFNSYYQKEGRASGSCDFKGVAMITTTDPSHGSCIFPGSKKVGNRTQTVVNSTEVAAGEATSRSLSRGFCVTIMILVTFSIL</sequence>
<feature type="signal peptide" evidence="3">
    <location>
        <begin position="1"/>
        <end position="28"/>
    </location>
</feature>
<feature type="chain" id="PRO_0000011884" description="Glucan endo-1,3-beta-glucosidase 1">
    <location>
        <begin position="29"/>
        <end position="485"/>
    </location>
</feature>
<feature type="propeptide" id="PRO_0000011885" description="Removed in mature form" evidence="3">
    <location>
        <begin position="486"/>
        <end position="511"/>
    </location>
</feature>
<feature type="active site" description="Proton donor" evidence="2">
    <location>
        <position position="137"/>
    </location>
</feature>
<feature type="active site" description="Nucleophile" evidence="2">
    <location>
        <position position="284"/>
    </location>
</feature>
<feature type="lipid moiety-binding region" description="GPI-anchor amidated alanine" evidence="3">
    <location>
        <position position="485"/>
    </location>
</feature>
<feature type="glycosylation site" description="N-linked (GlcNAc...) asparagine" evidence="3">
    <location>
        <position position="109"/>
    </location>
</feature>
<feature type="glycosylation site" description="N-linked (GlcNAc...) asparagine" evidence="3">
    <location>
        <position position="192"/>
    </location>
</feature>
<feature type="glycosylation site" description="N-linked (GlcNAc...) asparagine" evidence="3">
    <location>
        <position position="274"/>
    </location>
</feature>
<feature type="glycosylation site" description="N-linked (GlcNAc...) asparagine" evidence="3">
    <location>
        <position position="374"/>
    </location>
</feature>
<feature type="glycosylation site" description="N-linked (GlcNAc...) asparagine" evidence="3">
    <location>
        <position position="378"/>
    </location>
</feature>
<feature type="glycosylation site" description="N-linked (GlcNAc...) asparagine" evidence="3">
    <location>
        <position position="407"/>
    </location>
</feature>
<feature type="glycosylation site" description="N-linked (GlcNAc...) asparagine" evidence="3">
    <location>
        <position position="473"/>
    </location>
</feature>
<feature type="glycosylation site" description="N-linked (GlcNAc...) asparagine" evidence="3">
    <location>
        <position position="480"/>
    </location>
</feature>
<feature type="disulfide bond" evidence="1">
    <location>
        <begin position="382"/>
        <end position="445"/>
    </location>
</feature>
<keyword id="KW-0025">Alternative splicing</keyword>
<keyword id="KW-1003">Cell membrane</keyword>
<keyword id="KW-1015">Disulfide bond</keyword>
<keyword id="KW-0325">Glycoprotein</keyword>
<keyword id="KW-0326">Glycosidase</keyword>
<keyword id="KW-0336">GPI-anchor</keyword>
<keyword id="KW-0378">Hydrolase</keyword>
<keyword id="KW-0449">Lipoprotein</keyword>
<keyword id="KW-0472">Membrane</keyword>
<keyword id="KW-0611">Plant defense</keyword>
<keyword id="KW-1185">Reference proteome</keyword>
<keyword id="KW-0732">Signal</keyword>
<name>E131_ARATH</name>
<accession>O65399</accession>
<accession>F4IAH7</accession>
<accession>Q84W37</accession>
<protein>
    <recommendedName>
        <fullName>Glucan endo-1,3-beta-glucosidase 1</fullName>
        <ecNumber>3.2.1.39</ecNumber>
    </recommendedName>
    <alternativeName>
        <fullName>(1-&gt;3)-beta-glucan endohydrolase 1</fullName>
        <shortName>(1-&gt;3)-beta-glucanase 1</shortName>
    </alternativeName>
    <alternativeName>
        <fullName>Beta-1,3-endoglucanase 1</fullName>
        <shortName>Beta-1,3-glucanase 1</shortName>
    </alternativeName>
</protein>
<gene>
    <name type="ordered locus">At1g11820</name>
    <name type="ORF">F12F1.33</name>
    <name type="ORF">F25C20_1</name>
</gene>
<evidence type="ECO:0000250" key="1"/>
<evidence type="ECO:0000250" key="2">
    <source>
        <dbReference type="UniProtKB" id="O22317"/>
    </source>
</evidence>
<evidence type="ECO:0000255" key="3"/>
<evidence type="ECO:0000305" key="4"/>